<feature type="chain" id="PRO_0000076824" description="3-isopropylmalate dehydratase large subunit">
    <location>
        <begin position="1"/>
        <end position="460"/>
    </location>
</feature>
<feature type="binding site" evidence="1">
    <location>
        <position position="338"/>
    </location>
    <ligand>
        <name>[4Fe-4S] cluster</name>
        <dbReference type="ChEBI" id="CHEBI:49883"/>
    </ligand>
</feature>
<feature type="binding site" evidence="1">
    <location>
        <position position="398"/>
    </location>
    <ligand>
        <name>[4Fe-4S] cluster</name>
        <dbReference type="ChEBI" id="CHEBI:49883"/>
    </ligand>
</feature>
<feature type="binding site" evidence="1">
    <location>
        <position position="401"/>
    </location>
    <ligand>
        <name>[4Fe-4S] cluster</name>
        <dbReference type="ChEBI" id="CHEBI:49883"/>
    </ligand>
</feature>
<protein>
    <recommendedName>
        <fullName evidence="1">3-isopropylmalate dehydratase large subunit</fullName>
        <ecNumber evidence="1">4.2.1.33</ecNumber>
    </recommendedName>
    <alternativeName>
        <fullName evidence="1">Alpha-IPM isomerase</fullName>
        <shortName evidence="1">IPMI</shortName>
    </alternativeName>
    <alternativeName>
        <fullName evidence="1">Isopropylmalate isomerase</fullName>
    </alternativeName>
</protein>
<sequence>MSGKSIFDKLWDRHVITGDEGQPQLMYVDQHYIHEVTSPQAFQGLRDAGRKVRRPDLTFGTFDHNVPTVNIFDIRDAISKAQIDKLAENVIEFGIDNASHGSDKQGIVHMVGPETGRTQPGKFIVCGDSHTATHGAFGAIAFGIGTSEVEHVFATQTLWQVKPKKMLLEFTGKPQKGIYSKDYILALIAKYGVACGVGYVVEYRGEAIDRLTMEERMTICNMSIEFGSKMGIMNPDQTTYDYMRGRECVPEDFDAAVADWKTLVSDDDAEYDKVIRMDVSELAPMVTWGTNPSMGVDFDTPFPEVRDMNDERAYHYMGLRPGQKAEDINLGYIFIGSCTNARLSDLQLAARIVKGKKISPNLTAIVVPGSRPVKRAAEKIGLDKIFKDAGFEWREPGCSMCLGMNPDKVPDGVHCASTSNRNFEDRQGFGAKTHLCSPAMAAAAAISGHFVDVRRMPEVQ</sequence>
<proteinExistence type="inferred from homology"/>
<evidence type="ECO:0000255" key="1">
    <source>
        <dbReference type="HAMAP-Rule" id="MF_01026"/>
    </source>
</evidence>
<evidence type="ECO:0000305" key="2"/>
<accession>Q5LZF4</accession>
<keyword id="KW-0004">4Fe-4S</keyword>
<keyword id="KW-0028">Amino-acid biosynthesis</keyword>
<keyword id="KW-0100">Branched-chain amino acid biosynthesis</keyword>
<keyword id="KW-0408">Iron</keyword>
<keyword id="KW-0411">Iron-sulfur</keyword>
<keyword id="KW-0432">Leucine biosynthesis</keyword>
<keyword id="KW-0456">Lyase</keyword>
<keyword id="KW-0479">Metal-binding</keyword>
<organism>
    <name type="scientific">Streptococcus thermophilus (strain CNRZ 1066)</name>
    <dbReference type="NCBI Taxonomy" id="299768"/>
    <lineage>
        <taxon>Bacteria</taxon>
        <taxon>Bacillati</taxon>
        <taxon>Bacillota</taxon>
        <taxon>Bacilli</taxon>
        <taxon>Lactobacillales</taxon>
        <taxon>Streptococcaceae</taxon>
        <taxon>Streptococcus</taxon>
    </lineage>
</organism>
<gene>
    <name evidence="1" type="primary">leuC</name>
    <name type="ordered locus">str1201</name>
</gene>
<dbReference type="EC" id="4.2.1.33" evidence="1"/>
<dbReference type="EMBL" id="CP000024">
    <property type="protein sequence ID" value="AAV62746.1"/>
    <property type="status" value="ALT_INIT"/>
    <property type="molecule type" value="Genomic_DNA"/>
</dbReference>
<dbReference type="RefSeq" id="WP_041827050.1">
    <property type="nucleotide sequence ID" value="NC_006449.1"/>
</dbReference>
<dbReference type="SMR" id="Q5LZF4"/>
<dbReference type="KEGG" id="stc:str1201"/>
<dbReference type="HOGENOM" id="CLU_006714_3_4_9"/>
<dbReference type="UniPathway" id="UPA00048">
    <property type="reaction ID" value="UER00071"/>
</dbReference>
<dbReference type="GO" id="GO:0003861">
    <property type="term" value="F:3-isopropylmalate dehydratase activity"/>
    <property type="evidence" value="ECO:0007669"/>
    <property type="project" value="UniProtKB-UniRule"/>
</dbReference>
<dbReference type="GO" id="GO:0051539">
    <property type="term" value="F:4 iron, 4 sulfur cluster binding"/>
    <property type="evidence" value="ECO:0007669"/>
    <property type="project" value="UniProtKB-KW"/>
</dbReference>
<dbReference type="GO" id="GO:0046872">
    <property type="term" value="F:metal ion binding"/>
    <property type="evidence" value="ECO:0007669"/>
    <property type="project" value="UniProtKB-KW"/>
</dbReference>
<dbReference type="GO" id="GO:0009098">
    <property type="term" value="P:L-leucine biosynthetic process"/>
    <property type="evidence" value="ECO:0007669"/>
    <property type="project" value="UniProtKB-UniRule"/>
</dbReference>
<dbReference type="CDD" id="cd01583">
    <property type="entry name" value="IPMI"/>
    <property type="match status" value="1"/>
</dbReference>
<dbReference type="Gene3D" id="3.30.499.10">
    <property type="entry name" value="Aconitase, domain 3"/>
    <property type="match status" value="2"/>
</dbReference>
<dbReference type="HAMAP" id="MF_01026">
    <property type="entry name" value="LeuC_type1"/>
    <property type="match status" value="1"/>
</dbReference>
<dbReference type="InterPro" id="IPR004430">
    <property type="entry name" value="3-IsopropMal_deHydase_lsu"/>
</dbReference>
<dbReference type="InterPro" id="IPR015931">
    <property type="entry name" value="Acnase/IPM_dHydase_lsu_aba_1/3"/>
</dbReference>
<dbReference type="InterPro" id="IPR001030">
    <property type="entry name" value="Acoase/IPM_deHydtase_lsu_aba"/>
</dbReference>
<dbReference type="InterPro" id="IPR018136">
    <property type="entry name" value="Aconitase_4Fe-4S_BS"/>
</dbReference>
<dbReference type="InterPro" id="IPR036008">
    <property type="entry name" value="Aconitase_4Fe-4S_dom"/>
</dbReference>
<dbReference type="InterPro" id="IPR050067">
    <property type="entry name" value="IPM_dehydratase_rel_enz"/>
</dbReference>
<dbReference type="InterPro" id="IPR033941">
    <property type="entry name" value="IPMI_cat"/>
</dbReference>
<dbReference type="NCBIfam" id="TIGR00170">
    <property type="entry name" value="leuC"/>
    <property type="match status" value="1"/>
</dbReference>
<dbReference type="NCBIfam" id="NF004016">
    <property type="entry name" value="PRK05478.1"/>
    <property type="match status" value="1"/>
</dbReference>
<dbReference type="NCBIfam" id="NF009116">
    <property type="entry name" value="PRK12466.1"/>
    <property type="match status" value="1"/>
</dbReference>
<dbReference type="PANTHER" id="PTHR43822:SF9">
    <property type="entry name" value="3-ISOPROPYLMALATE DEHYDRATASE"/>
    <property type="match status" value="1"/>
</dbReference>
<dbReference type="PANTHER" id="PTHR43822">
    <property type="entry name" value="HOMOACONITASE, MITOCHONDRIAL-RELATED"/>
    <property type="match status" value="1"/>
</dbReference>
<dbReference type="Pfam" id="PF00330">
    <property type="entry name" value="Aconitase"/>
    <property type="match status" value="1"/>
</dbReference>
<dbReference type="PRINTS" id="PR00415">
    <property type="entry name" value="ACONITASE"/>
</dbReference>
<dbReference type="SUPFAM" id="SSF53732">
    <property type="entry name" value="Aconitase iron-sulfur domain"/>
    <property type="match status" value="1"/>
</dbReference>
<dbReference type="PROSITE" id="PS00450">
    <property type="entry name" value="ACONITASE_1"/>
    <property type="match status" value="1"/>
</dbReference>
<dbReference type="PROSITE" id="PS01244">
    <property type="entry name" value="ACONITASE_2"/>
    <property type="match status" value="1"/>
</dbReference>
<comment type="function">
    <text evidence="1">Catalyzes the isomerization between 2-isopropylmalate and 3-isopropylmalate, via the formation of 2-isopropylmaleate.</text>
</comment>
<comment type="catalytic activity">
    <reaction evidence="1">
        <text>(2R,3S)-3-isopropylmalate = (2S)-2-isopropylmalate</text>
        <dbReference type="Rhea" id="RHEA:32287"/>
        <dbReference type="ChEBI" id="CHEBI:1178"/>
        <dbReference type="ChEBI" id="CHEBI:35121"/>
        <dbReference type="EC" id="4.2.1.33"/>
    </reaction>
</comment>
<comment type="cofactor">
    <cofactor evidence="1">
        <name>[4Fe-4S] cluster</name>
        <dbReference type="ChEBI" id="CHEBI:49883"/>
    </cofactor>
    <text evidence="1">Binds 1 [4Fe-4S] cluster per subunit.</text>
</comment>
<comment type="pathway">
    <text evidence="1">Amino-acid biosynthesis; L-leucine biosynthesis; L-leucine from 3-methyl-2-oxobutanoate: step 2/4.</text>
</comment>
<comment type="subunit">
    <text evidence="1">Heterodimer of LeuC and LeuD.</text>
</comment>
<comment type="similarity">
    <text evidence="1">Belongs to the aconitase/IPM isomerase family. LeuC type 1 subfamily.</text>
</comment>
<comment type="sequence caution" evidence="2">
    <conflict type="erroneous initiation">
        <sequence resource="EMBL-CDS" id="AAV62746"/>
    </conflict>
</comment>
<reference key="1">
    <citation type="journal article" date="2004" name="Nat. Biotechnol.">
        <title>Complete sequence and comparative genome analysis of the dairy bacterium Streptococcus thermophilus.</title>
        <authorList>
            <person name="Bolotin A."/>
            <person name="Quinquis B."/>
            <person name="Renault P."/>
            <person name="Sorokin A."/>
            <person name="Ehrlich S.D."/>
            <person name="Kulakauskas S."/>
            <person name="Lapidus A."/>
            <person name="Goltsman E."/>
            <person name="Mazur M."/>
            <person name="Pusch G.D."/>
            <person name="Fonstein M."/>
            <person name="Overbeek R."/>
            <person name="Kyprides N."/>
            <person name="Purnelle B."/>
            <person name="Prozzi D."/>
            <person name="Ngui K."/>
            <person name="Masuy D."/>
            <person name="Hancy F."/>
            <person name="Burteau S."/>
            <person name="Boutry M."/>
            <person name="Delcour J."/>
            <person name="Goffeau A."/>
            <person name="Hols P."/>
        </authorList>
    </citation>
    <scope>NUCLEOTIDE SEQUENCE [LARGE SCALE GENOMIC DNA]</scope>
    <source>
        <strain>CNRZ 1066</strain>
    </source>
</reference>
<name>LEUC_STRT1</name>